<sequence>MKVIFLQDVKGKGKKGEVKNVADGYAHNFLIKKGLAVEANASNISALNGQKQKEKKEAIAELEQAKSLKETLEKLTVELSAKSGEGGRLFGSVTSKQITEQLQKDHNIKVDKRKLELPDGIRALGYTNVPVKLHPEVQAVLKVHVKEEA</sequence>
<keyword id="KW-0002">3D-structure</keyword>
<keyword id="KW-1185">Reference proteome</keyword>
<keyword id="KW-0687">Ribonucleoprotein</keyword>
<keyword id="KW-0689">Ribosomal protein</keyword>
<keyword id="KW-0694">RNA-binding</keyword>
<keyword id="KW-0699">rRNA-binding</keyword>
<dbReference type="EMBL" id="D26185">
    <property type="protein sequence ID" value="BAA05181.1"/>
    <property type="molecule type" value="Genomic_DNA"/>
</dbReference>
<dbReference type="EMBL" id="AL009126">
    <property type="protein sequence ID" value="CAB16087.1"/>
    <property type="molecule type" value="Genomic_DNA"/>
</dbReference>
<dbReference type="PIR" id="S65975">
    <property type="entry name" value="S65975"/>
</dbReference>
<dbReference type="RefSeq" id="NP_391930.1">
    <property type="nucleotide sequence ID" value="NC_000964.3"/>
</dbReference>
<dbReference type="RefSeq" id="WP_003226915.1">
    <property type="nucleotide sequence ID" value="NZ_OZ025638.1"/>
</dbReference>
<dbReference type="PDB" id="7QGU">
    <property type="method" value="EM"/>
    <property type="resolution" value="4.75 A"/>
    <property type="chains" value="X=1-149"/>
</dbReference>
<dbReference type="PDB" id="7QV1">
    <property type="method" value="EM"/>
    <property type="resolution" value="3.50 A"/>
    <property type="chains" value="X=1-149"/>
</dbReference>
<dbReference type="PDB" id="7QV3">
    <property type="method" value="EM"/>
    <property type="resolution" value="5.14 A"/>
    <property type="chains" value="X=1-149"/>
</dbReference>
<dbReference type="PDB" id="8QPP">
    <property type="method" value="EM"/>
    <property type="resolution" value="3.40 A"/>
    <property type="chains" value="9=1-149"/>
</dbReference>
<dbReference type="PDBsum" id="7QGU"/>
<dbReference type="PDBsum" id="7QV1"/>
<dbReference type="PDBsum" id="7QV3"/>
<dbReference type="PDBsum" id="8QPP"/>
<dbReference type="EMDB" id="EMD-14157"/>
<dbReference type="EMDB" id="EMD-14159"/>
<dbReference type="SMR" id="P37437"/>
<dbReference type="FunCoup" id="P37437">
    <property type="interactions" value="695"/>
</dbReference>
<dbReference type="STRING" id="224308.BSU40500"/>
<dbReference type="jPOST" id="P37437"/>
<dbReference type="PaxDb" id="224308-BSU40500"/>
<dbReference type="EnsemblBacteria" id="CAB16087">
    <property type="protein sequence ID" value="CAB16087"/>
    <property type="gene ID" value="BSU_40500"/>
</dbReference>
<dbReference type="GeneID" id="86871302"/>
<dbReference type="GeneID" id="937830"/>
<dbReference type="KEGG" id="bsu:BSU40500"/>
<dbReference type="PATRIC" id="fig|224308.179.peg.4384"/>
<dbReference type="eggNOG" id="COG0359">
    <property type="taxonomic scope" value="Bacteria"/>
</dbReference>
<dbReference type="InParanoid" id="P37437"/>
<dbReference type="OrthoDB" id="9788336at2"/>
<dbReference type="PhylomeDB" id="P37437"/>
<dbReference type="BioCyc" id="BSUB:BSU40500-MONOMER"/>
<dbReference type="Proteomes" id="UP000001570">
    <property type="component" value="Chromosome"/>
</dbReference>
<dbReference type="GO" id="GO:0022625">
    <property type="term" value="C:cytosolic large ribosomal subunit"/>
    <property type="evidence" value="ECO:0000318"/>
    <property type="project" value="GO_Central"/>
</dbReference>
<dbReference type="GO" id="GO:0019843">
    <property type="term" value="F:rRNA binding"/>
    <property type="evidence" value="ECO:0007669"/>
    <property type="project" value="UniProtKB-UniRule"/>
</dbReference>
<dbReference type="GO" id="GO:0003735">
    <property type="term" value="F:structural constituent of ribosome"/>
    <property type="evidence" value="ECO:0007669"/>
    <property type="project" value="InterPro"/>
</dbReference>
<dbReference type="GO" id="GO:0006412">
    <property type="term" value="P:translation"/>
    <property type="evidence" value="ECO:0007669"/>
    <property type="project" value="UniProtKB-UniRule"/>
</dbReference>
<dbReference type="FunFam" id="3.10.430.100:FF:000002">
    <property type="entry name" value="50S ribosomal protein L9"/>
    <property type="match status" value="1"/>
</dbReference>
<dbReference type="FunFam" id="3.40.5.10:FF:000002">
    <property type="entry name" value="50S ribosomal protein L9"/>
    <property type="match status" value="1"/>
</dbReference>
<dbReference type="Gene3D" id="3.10.430.100">
    <property type="entry name" value="Ribosomal protein L9, C-terminal domain"/>
    <property type="match status" value="1"/>
</dbReference>
<dbReference type="Gene3D" id="3.40.5.10">
    <property type="entry name" value="Ribosomal protein L9, N-terminal domain"/>
    <property type="match status" value="1"/>
</dbReference>
<dbReference type="HAMAP" id="MF_00503">
    <property type="entry name" value="Ribosomal_bL9"/>
    <property type="match status" value="1"/>
</dbReference>
<dbReference type="InterPro" id="IPR000244">
    <property type="entry name" value="Ribosomal_bL9"/>
</dbReference>
<dbReference type="InterPro" id="IPR009027">
    <property type="entry name" value="Ribosomal_bL9/RNase_H1_N"/>
</dbReference>
<dbReference type="InterPro" id="IPR020594">
    <property type="entry name" value="Ribosomal_bL9_bac/chp"/>
</dbReference>
<dbReference type="InterPro" id="IPR020069">
    <property type="entry name" value="Ribosomal_bL9_C"/>
</dbReference>
<dbReference type="InterPro" id="IPR036791">
    <property type="entry name" value="Ribosomal_bL9_C_sf"/>
</dbReference>
<dbReference type="InterPro" id="IPR020070">
    <property type="entry name" value="Ribosomal_bL9_N"/>
</dbReference>
<dbReference type="InterPro" id="IPR036935">
    <property type="entry name" value="Ribosomal_bL9_N_sf"/>
</dbReference>
<dbReference type="NCBIfam" id="TIGR00158">
    <property type="entry name" value="L9"/>
    <property type="match status" value="1"/>
</dbReference>
<dbReference type="PANTHER" id="PTHR21368">
    <property type="entry name" value="50S RIBOSOMAL PROTEIN L9"/>
    <property type="match status" value="1"/>
</dbReference>
<dbReference type="Pfam" id="PF03948">
    <property type="entry name" value="Ribosomal_L9_C"/>
    <property type="match status" value="1"/>
</dbReference>
<dbReference type="Pfam" id="PF01281">
    <property type="entry name" value="Ribosomal_L9_N"/>
    <property type="match status" value="1"/>
</dbReference>
<dbReference type="SUPFAM" id="SSF55658">
    <property type="entry name" value="L9 N-domain-like"/>
    <property type="match status" value="1"/>
</dbReference>
<dbReference type="SUPFAM" id="SSF55653">
    <property type="entry name" value="Ribosomal protein L9 C-domain"/>
    <property type="match status" value="1"/>
</dbReference>
<dbReference type="PROSITE" id="PS00651">
    <property type="entry name" value="RIBOSOMAL_L9"/>
    <property type="match status" value="1"/>
</dbReference>
<gene>
    <name evidence="2" type="primary">rplI</name>
    <name type="ordered locus">BSU40500</name>
</gene>
<feature type="chain" id="PRO_0000176618" description="Large ribosomal subunit protein bL9">
    <location>
        <begin position="1"/>
        <end position="149"/>
    </location>
</feature>
<accession>P37437</accession>
<proteinExistence type="evidence at protein level"/>
<reference key="1">
    <citation type="journal article" date="1994" name="DNA Res.">
        <title>Systematic sequencing of the 180 kilobase region of the Bacillus subtilis chromosome containing the replication origin.</title>
        <authorList>
            <person name="Ogasawara N."/>
            <person name="Nakai S."/>
            <person name="Yoshikawa H."/>
        </authorList>
    </citation>
    <scope>NUCLEOTIDE SEQUENCE [GENOMIC DNA]</scope>
    <source>
        <strain>168</strain>
    </source>
</reference>
<reference key="2">
    <citation type="journal article" date="1997" name="Nature">
        <title>The complete genome sequence of the Gram-positive bacterium Bacillus subtilis.</title>
        <authorList>
            <person name="Kunst F."/>
            <person name="Ogasawara N."/>
            <person name="Moszer I."/>
            <person name="Albertini A.M."/>
            <person name="Alloni G."/>
            <person name="Azevedo V."/>
            <person name="Bertero M.G."/>
            <person name="Bessieres P."/>
            <person name="Bolotin A."/>
            <person name="Borchert S."/>
            <person name="Borriss R."/>
            <person name="Boursier L."/>
            <person name="Brans A."/>
            <person name="Braun M."/>
            <person name="Brignell S.C."/>
            <person name="Bron S."/>
            <person name="Brouillet S."/>
            <person name="Bruschi C.V."/>
            <person name="Caldwell B."/>
            <person name="Capuano V."/>
            <person name="Carter N.M."/>
            <person name="Choi S.-K."/>
            <person name="Codani J.-J."/>
            <person name="Connerton I.F."/>
            <person name="Cummings N.J."/>
            <person name="Daniel R.A."/>
            <person name="Denizot F."/>
            <person name="Devine K.M."/>
            <person name="Duesterhoeft A."/>
            <person name="Ehrlich S.D."/>
            <person name="Emmerson P.T."/>
            <person name="Entian K.-D."/>
            <person name="Errington J."/>
            <person name="Fabret C."/>
            <person name="Ferrari E."/>
            <person name="Foulger D."/>
            <person name="Fritz C."/>
            <person name="Fujita M."/>
            <person name="Fujita Y."/>
            <person name="Fuma S."/>
            <person name="Galizzi A."/>
            <person name="Galleron N."/>
            <person name="Ghim S.-Y."/>
            <person name="Glaser P."/>
            <person name="Goffeau A."/>
            <person name="Golightly E.J."/>
            <person name="Grandi G."/>
            <person name="Guiseppi G."/>
            <person name="Guy B.J."/>
            <person name="Haga K."/>
            <person name="Haiech J."/>
            <person name="Harwood C.R."/>
            <person name="Henaut A."/>
            <person name="Hilbert H."/>
            <person name="Holsappel S."/>
            <person name="Hosono S."/>
            <person name="Hullo M.-F."/>
            <person name="Itaya M."/>
            <person name="Jones L.-M."/>
            <person name="Joris B."/>
            <person name="Karamata D."/>
            <person name="Kasahara Y."/>
            <person name="Klaerr-Blanchard M."/>
            <person name="Klein C."/>
            <person name="Kobayashi Y."/>
            <person name="Koetter P."/>
            <person name="Koningstein G."/>
            <person name="Krogh S."/>
            <person name="Kumano M."/>
            <person name="Kurita K."/>
            <person name="Lapidus A."/>
            <person name="Lardinois S."/>
            <person name="Lauber J."/>
            <person name="Lazarevic V."/>
            <person name="Lee S.-M."/>
            <person name="Levine A."/>
            <person name="Liu H."/>
            <person name="Masuda S."/>
            <person name="Mauel C."/>
            <person name="Medigue C."/>
            <person name="Medina N."/>
            <person name="Mellado R.P."/>
            <person name="Mizuno M."/>
            <person name="Moestl D."/>
            <person name="Nakai S."/>
            <person name="Noback M."/>
            <person name="Noone D."/>
            <person name="O'Reilly M."/>
            <person name="Ogawa K."/>
            <person name="Ogiwara A."/>
            <person name="Oudega B."/>
            <person name="Park S.-H."/>
            <person name="Parro V."/>
            <person name="Pohl T.M."/>
            <person name="Portetelle D."/>
            <person name="Porwollik S."/>
            <person name="Prescott A.M."/>
            <person name="Presecan E."/>
            <person name="Pujic P."/>
            <person name="Purnelle B."/>
            <person name="Rapoport G."/>
            <person name="Rey M."/>
            <person name="Reynolds S."/>
            <person name="Rieger M."/>
            <person name="Rivolta C."/>
            <person name="Rocha E."/>
            <person name="Roche B."/>
            <person name="Rose M."/>
            <person name="Sadaie Y."/>
            <person name="Sato T."/>
            <person name="Scanlan E."/>
            <person name="Schleich S."/>
            <person name="Schroeter R."/>
            <person name="Scoffone F."/>
            <person name="Sekiguchi J."/>
            <person name="Sekowska A."/>
            <person name="Seror S.J."/>
            <person name="Serror P."/>
            <person name="Shin B.-S."/>
            <person name="Soldo B."/>
            <person name="Sorokin A."/>
            <person name="Tacconi E."/>
            <person name="Takagi T."/>
            <person name="Takahashi H."/>
            <person name="Takemaru K."/>
            <person name="Takeuchi M."/>
            <person name="Tamakoshi A."/>
            <person name="Tanaka T."/>
            <person name="Terpstra P."/>
            <person name="Tognoni A."/>
            <person name="Tosato V."/>
            <person name="Uchiyama S."/>
            <person name="Vandenbol M."/>
            <person name="Vannier F."/>
            <person name="Vassarotti A."/>
            <person name="Viari A."/>
            <person name="Wambutt R."/>
            <person name="Wedler E."/>
            <person name="Wedler H."/>
            <person name="Weitzenegger T."/>
            <person name="Winters P."/>
            <person name="Wipat A."/>
            <person name="Yamamoto H."/>
            <person name="Yamane K."/>
            <person name="Yasumoto K."/>
            <person name="Yata K."/>
            <person name="Yoshida K."/>
            <person name="Yoshikawa H.-F."/>
            <person name="Zumstein E."/>
            <person name="Yoshikawa H."/>
            <person name="Danchin A."/>
        </authorList>
    </citation>
    <scope>NUCLEOTIDE SEQUENCE [LARGE SCALE GENOMIC DNA]</scope>
    <source>
        <strain>168</strain>
    </source>
</reference>
<reference key="3">
    <citation type="journal article" date="2022" name="Nature">
        <title>Ribosome collisions induce mRNA cleavage and ribosome rescue in bacteria.</title>
        <authorList>
            <person name="Saito K."/>
            <person name="Kratzat H."/>
            <person name="Campbell A."/>
            <person name="Buschauer R."/>
            <person name="Burroughs A.M."/>
            <person name="Berninghausen O."/>
            <person name="Aravind L."/>
            <person name="Green R."/>
            <person name="Beckmann R."/>
            <person name="Buskirk A.R."/>
        </authorList>
    </citation>
    <scope>STRUCTURE BY ELECTRON MICROSCOPY (3.37 ANGSTROMS)</scope>
    <scope>SUBUNIT</scope>
    <source>
        <strain>168</strain>
    </source>
</reference>
<organism>
    <name type="scientific">Bacillus subtilis (strain 168)</name>
    <dbReference type="NCBI Taxonomy" id="224308"/>
    <lineage>
        <taxon>Bacteria</taxon>
        <taxon>Bacillati</taxon>
        <taxon>Bacillota</taxon>
        <taxon>Bacilli</taxon>
        <taxon>Bacillales</taxon>
        <taxon>Bacillaceae</taxon>
        <taxon>Bacillus</taxon>
    </lineage>
</organism>
<comment type="function">
    <text evidence="1">Binds to the 23S rRNA.</text>
</comment>
<comment type="subunit">
    <text evidence="1">Part of the 50S ribosomal subunit (PubMed:35264790). In stalled/collided disomes (pairs of ribosomes where the leading ribosome is stalled and a second ribosome has collided with it), bL9 in the collided ribosome contacts bS6 and uL2, while it contacts only helices of the 16S rRNA in the stalled ribosome; the inter-ribosome bridge thus formed is different from that formed between normally translating ribosomes (PubMed:35264790).</text>
</comment>
<comment type="similarity">
    <text evidence="3">Belongs to the bacterial ribosomal protein bL9 family.</text>
</comment>
<evidence type="ECO:0000269" key="1">
    <source>
    </source>
</evidence>
<evidence type="ECO:0000303" key="2">
    <source>
    </source>
</evidence>
<evidence type="ECO:0000305" key="3"/>
<protein>
    <recommendedName>
        <fullName evidence="3">Large ribosomal subunit protein bL9</fullName>
    </recommendedName>
    <alternativeName>
        <fullName>50S ribosomal protein L9</fullName>
    </alternativeName>
    <alternativeName>
        <fullName>BL17</fullName>
    </alternativeName>
</protein>
<name>RL9_BACSU</name>